<accession>B6YS07</accession>
<feature type="chain" id="PRO_1000188028" description="Small ribosomal subunit biogenesis GTPase RsgA">
    <location>
        <begin position="1"/>
        <end position="311"/>
    </location>
</feature>
<feature type="domain" description="CP-type G" evidence="2">
    <location>
        <begin position="77"/>
        <end position="239"/>
    </location>
</feature>
<feature type="binding site" evidence="1">
    <location>
        <begin position="126"/>
        <end position="129"/>
    </location>
    <ligand>
        <name>GTP</name>
        <dbReference type="ChEBI" id="CHEBI:37565"/>
    </ligand>
</feature>
<feature type="binding site" evidence="1">
    <location>
        <begin position="180"/>
        <end position="188"/>
    </location>
    <ligand>
        <name>GTP</name>
        <dbReference type="ChEBI" id="CHEBI:37565"/>
    </ligand>
</feature>
<feature type="binding site" evidence="1">
    <location>
        <position position="263"/>
    </location>
    <ligand>
        <name>Zn(2+)</name>
        <dbReference type="ChEBI" id="CHEBI:29105"/>
    </ligand>
</feature>
<feature type="binding site" evidence="1">
    <location>
        <position position="268"/>
    </location>
    <ligand>
        <name>Zn(2+)</name>
        <dbReference type="ChEBI" id="CHEBI:29105"/>
    </ligand>
</feature>
<feature type="binding site" evidence="1">
    <location>
        <position position="270"/>
    </location>
    <ligand>
        <name>Zn(2+)</name>
        <dbReference type="ChEBI" id="CHEBI:29105"/>
    </ligand>
</feature>
<feature type="binding site" evidence="1">
    <location>
        <position position="276"/>
    </location>
    <ligand>
        <name>Zn(2+)</name>
        <dbReference type="ChEBI" id="CHEBI:29105"/>
    </ligand>
</feature>
<gene>
    <name evidence="1" type="primary">rsgA</name>
    <name type="ordered locus">CFPG_716</name>
</gene>
<reference key="1">
    <citation type="journal article" date="2008" name="Science">
        <title>Genome of an endosymbiont coupling N2 fixation to cellulolysis within RT protist cells in termite gut.</title>
        <authorList>
            <person name="Hongoh Y."/>
            <person name="Sharma V.K."/>
            <person name="Prakash T."/>
            <person name="Noda S."/>
            <person name="Toh H."/>
            <person name="Taylor T.D."/>
            <person name="Kudo T."/>
            <person name="Sakaki Y."/>
            <person name="Toyoda A."/>
            <person name="Hattori M."/>
            <person name="Ohkuma M."/>
        </authorList>
    </citation>
    <scope>NUCLEOTIDE SEQUENCE [LARGE SCALE GENOMIC DNA]</scope>
</reference>
<name>RSGA_AZOPC</name>
<evidence type="ECO:0000255" key="1">
    <source>
        <dbReference type="HAMAP-Rule" id="MF_01820"/>
    </source>
</evidence>
<evidence type="ECO:0000255" key="2">
    <source>
        <dbReference type="PROSITE-ProRule" id="PRU01058"/>
    </source>
</evidence>
<proteinExistence type="inferred from homology"/>
<sequence>MKGLVIKNTGSWYQLKTDRGELIKAKLKGNFRLKGIQSTNPISIGDYVLIEKDLYGTAFISTIEDRKNYIIRRASNLSKQSHIIATNLDQAFLIVTVNYPITTTIFIDRFLVTTEAYRIPTLLFFNKTDLYNNHDMNYADILIHLYKSIGYSCYKIAATKDEDLLFMEKLLRGKITLFYGHSGVGKSTIVNRLIPNAKQKVQSISKHHNKGMHTTTFSKMLELPSSSGYIIDTPGIKGFGIFDIEKEEISHYFPDIFRFSPYCKFYNCTHQKEPACAVREAIKNHYISKSRYISYINILEDVDMNKYREAF</sequence>
<comment type="function">
    <text evidence="1">One of several proteins that assist in the late maturation steps of the functional core of the 30S ribosomal subunit. Helps release RbfA from mature subunits. May play a role in the assembly of ribosomal proteins into the subunit. Circularly permuted GTPase that catalyzes slow GTP hydrolysis, GTPase activity is stimulated by the 30S ribosomal subunit.</text>
</comment>
<comment type="cofactor">
    <cofactor evidence="1">
        <name>Zn(2+)</name>
        <dbReference type="ChEBI" id="CHEBI:29105"/>
    </cofactor>
    <text evidence="1">Binds 1 zinc ion per subunit.</text>
</comment>
<comment type="subunit">
    <text evidence="1">Monomer. Associates with 30S ribosomal subunit, binds 16S rRNA.</text>
</comment>
<comment type="subcellular location">
    <subcellularLocation>
        <location evidence="1">Cytoplasm</location>
    </subcellularLocation>
</comment>
<comment type="similarity">
    <text evidence="1">Belongs to the TRAFAC class YlqF/YawG GTPase family. RsgA subfamily.</text>
</comment>
<protein>
    <recommendedName>
        <fullName evidence="1">Small ribosomal subunit biogenesis GTPase RsgA</fullName>
        <ecNumber evidence="1">3.6.1.-</ecNumber>
    </recommendedName>
</protein>
<organism>
    <name type="scientific">Azobacteroides pseudotrichonymphae genomovar. CFP2</name>
    <dbReference type="NCBI Taxonomy" id="511995"/>
    <lineage>
        <taxon>Bacteria</taxon>
        <taxon>Pseudomonadati</taxon>
        <taxon>Bacteroidota</taxon>
        <taxon>Bacteroidia</taxon>
        <taxon>Bacteroidales</taxon>
        <taxon>Candidatus Azobacteroides</taxon>
    </lineage>
</organism>
<keyword id="KW-0963">Cytoplasm</keyword>
<keyword id="KW-0342">GTP-binding</keyword>
<keyword id="KW-0378">Hydrolase</keyword>
<keyword id="KW-0479">Metal-binding</keyword>
<keyword id="KW-0547">Nucleotide-binding</keyword>
<keyword id="KW-1185">Reference proteome</keyword>
<keyword id="KW-0690">Ribosome biogenesis</keyword>
<keyword id="KW-0694">RNA-binding</keyword>
<keyword id="KW-0699">rRNA-binding</keyword>
<keyword id="KW-0862">Zinc</keyword>
<dbReference type="EC" id="3.6.1.-" evidence="1"/>
<dbReference type="EMBL" id="AP010656">
    <property type="protein sequence ID" value="BAG83979.1"/>
    <property type="molecule type" value="Genomic_DNA"/>
</dbReference>
<dbReference type="RefSeq" id="WP_012573735.1">
    <property type="nucleotide sequence ID" value="NC_011565.1"/>
</dbReference>
<dbReference type="SMR" id="B6YS07"/>
<dbReference type="STRING" id="511995.CFPG_716"/>
<dbReference type="KEGG" id="aps:CFPG_716"/>
<dbReference type="eggNOG" id="COG1162">
    <property type="taxonomic scope" value="Bacteria"/>
</dbReference>
<dbReference type="HOGENOM" id="CLU_033617_2_0_10"/>
<dbReference type="OrthoDB" id="9809485at2"/>
<dbReference type="Proteomes" id="UP000000723">
    <property type="component" value="Chromosome"/>
</dbReference>
<dbReference type="GO" id="GO:0005737">
    <property type="term" value="C:cytoplasm"/>
    <property type="evidence" value="ECO:0007669"/>
    <property type="project" value="UniProtKB-SubCell"/>
</dbReference>
<dbReference type="GO" id="GO:0005525">
    <property type="term" value="F:GTP binding"/>
    <property type="evidence" value="ECO:0007669"/>
    <property type="project" value="UniProtKB-UniRule"/>
</dbReference>
<dbReference type="GO" id="GO:0003924">
    <property type="term" value="F:GTPase activity"/>
    <property type="evidence" value="ECO:0007669"/>
    <property type="project" value="UniProtKB-UniRule"/>
</dbReference>
<dbReference type="GO" id="GO:0046872">
    <property type="term" value="F:metal ion binding"/>
    <property type="evidence" value="ECO:0007669"/>
    <property type="project" value="UniProtKB-KW"/>
</dbReference>
<dbReference type="GO" id="GO:0019843">
    <property type="term" value="F:rRNA binding"/>
    <property type="evidence" value="ECO:0007669"/>
    <property type="project" value="UniProtKB-KW"/>
</dbReference>
<dbReference type="GO" id="GO:0042274">
    <property type="term" value="P:ribosomal small subunit biogenesis"/>
    <property type="evidence" value="ECO:0007669"/>
    <property type="project" value="UniProtKB-UniRule"/>
</dbReference>
<dbReference type="CDD" id="cd04466">
    <property type="entry name" value="S1_YloQ_GTPase"/>
    <property type="match status" value="1"/>
</dbReference>
<dbReference type="CDD" id="cd01854">
    <property type="entry name" value="YjeQ_EngC"/>
    <property type="match status" value="1"/>
</dbReference>
<dbReference type="Gene3D" id="2.40.50.140">
    <property type="entry name" value="Nucleic acid-binding proteins"/>
    <property type="match status" value="1"/>
</dbReference>
<dbReference type="Gene3D" id="3.40.50.300">
    <property type="entry name" value="P-loop containing nucleotide triphosphate hydrolases"/>
    <property type="match status" value="1"/>
</dbReference>
<dbReference type="Gene3D" id="1.10.40.50">
    <property type="entry name" value="Probable gtpase engc, domain 3"/>
    <property type="match status" value="1"/>
</dbReference>
<dbReference type="HAMAP" id="MF_01820">
    <property type="entry name" value="GTPase_RsgA"/>
    <property type="match status" value="1"/>
</dbReference>
<dbReference type="InterPro" id="IPR030378">
    <property type="entry name" value="G_CP_dom"/>
</dbReference>
<dbReference type="InterPro" id="IPR012340">
    <property type="entry name" value="NA-bd_OB-fold"/>
</dbReference>
<dbReference type="InterPro" id="IPR027417">
    <property type="entry name" value="P-loop_NTPase"/>
</dbReference>
<dbReference type="InterPro" id="IPR004881">
    <property type="entry name" value="Ribosome_biogen_GTPase_RsgA"/>
</dbReference>
<dbReference type="InterPro" id="IPR010914">
    <property type="entry name" value="RsgA_GTPase_dom"/>
</dbReference>
<dbReference type="InterPro" id="IPR031944">
    <property type="entry name" value="RsgA_N"/>
</dbReference>
<dbReference type="NCBIfam" id="TIGR00157">
    <property type="entry name" value="ribosome small subunit-dependent GTPase A"/>
    <property type="match status" value="1"/>
</dbReference>
<dbReference type="PANTHER" id="PTHR32120">
    <property type="entry name" value="SMALL RIBOSOMAL SUBUNIT BIOGENESIS GTPASE RSGA"/>
    <property type="match status" value="1"/>
</dbReference>
<dbReference type="PANTHER" id="PTHR32120:SF11">
    <property type="entry name" value="SMALL RIBOSOMAL SUBUNIT BIOGENESIS GTPASE RSGA 1, MITOCHONDRIAL-RELATED"/>
    <property type="match status" value="1"/>
</dbReference>
<dbReference type="Pfam" id="PF03193">
    <property type="entry name" value="RsgA_GTPase"/>
    <property type="match status" value="1"/>
</dbReference>
<dbReference type="Pfam" id="PF16745">
    <property type="entry name" value="RsgA_N"/>
    <property type="match status" value="1"/>
</dbReference>
<dbReference type="SUPFAM" id="SSF50249">
    <property type="entry name" value="Nucleic acid-binding proteins"/>
    <property type="match status" value="1"/>
</dbReference>
<dbReference type="SUPFAM" id="SSF52540">
    <property type="entry name" value="P-loop containing nucleoside triphosphate hydrolases"/>
    <property type="match status" value="1"/>
</dbReference>
<dbReference type="PROSITE" id="PS50936">
    <property type="entry name" value="ENGC_GTPASE"/>
    <property type="match status" value="1"/>
</dbReference>
<dbReference type="PROSITE" id="PS51721">
    <property type="entry name" value="G_CP"/>
    <property type="match status" value="1"/>
</dbReference>